<name>CYB_NAECA</name>
<accession>Q35130</accession>
<feature type="chain" id="PRO_0000061262" description="Cytochrome b">
    <location>
        <begin position="1"/>
        <end position="379"/>
    </location>
</feature>
<feature type="transmembrane region" description="Helical" evidence="2">
    <location>
        <begin position="33"/>
        <end position="53"/>
    </location>
</feature>
<feature type="transmembrane region" description="Helical" evidence="2">
    <location>
        <begin position="77"/>
        <end position="98"/>
    </location>
</feature>
<feature type="transmembrane region" description="Helical" evidence="2">
    <location>
        <begin position="113"/>
        <end position="133"/>
    </location>
</feature>
<feature type="transmembrane region" description="Helical" evidence="2">
    <location>
        <begin position="178"/>
        <end position="198"/>
    </location>
</feature>
<feature type="transmembrane region" description="Helical" evidence="2">
    <location>
        <begin position="226"/>
        <end position="246"/>
    </location>
</feature>
<feature type="transmembrane region" description="Helical" evidence="2">
    <location>
        <begin position="288"/>
        <end position="308"/>
    </location>
</feature>
<feature type="transmembrane region" description="Helical" evidence="2">
    <location>
        <begin position="320"/>
        <end position="340"/>
    </location>
</feature>
<feature type="transmembrane region" description="Helical" evidence="2">
    <location>
        <begin position="347"/>
        <end position="367"/>
    </location>
</feature>
<feature type="binding site" description="axial binding residue" evidence="2">
    <location>
        <position position="83"/>
    </location>
    <ligand>
        <name>heme b</name>
        <dbReference type="ChEBI" id="CHEBI:60344"/>
        <label>b562</label>
    </ligand>
    <ligandPart>
        <name>Fe</name>
        <dbReference type="ChEBI" id="CHEBI:18248"/>
    </ligandPart>
</feature>
<feature type="binding site" description="axial binding residue" evidence="2">
    <location>
        <position position="97"/>
    </location>
    <ligand>
        <name>heme b</name>
        <dbReference type="ChEBI" id="CHEBI:60344"/>
        <label>b566</label>
    </ligand>
    <ligandPart>
        <name>Fe</name>
        <dbReference type="ChEBI" id="CHEBI:18248"/>
    </ligandPart>
</feature>
<feature type="binding site" description="axial binding residue" evidence="2">
    <location>
        <position position="182"/>
    </location>
    <ligand>
        <name>heme b</name>
        <dbReference type="ChEBI" id="CHEBI:60344"/>
        <label>b562</label>
    </ligand>
    <ligandPart>
        <name>Fe</name>
        <dbReference type="ChEBI" id="CHEBI:18248"/>
    </ligandPart>
</feature>
<feature type="binding site" description="axial binding residue" evidence="2">
    <location>
        <position position="196"/>
    </location>
    <ligand>
        <name>heme b</name>
        <dbReference type="ChEBI" id="CHEBI:60344"/>
        <label>b566</label>
    </ligand>
    <ligandPart>
        <name>Fe</name>
        <dbReference type="ChEBI" id="CHEBI:18248"/>
    </ligandPart>
</feature>
<feature type="binding site" evidence="2">
    <location>
        <position position="201"/>
    </location>
    <ligand>
        <name>a ubiquinone</name>
        <dbReference type="ChEBI" id="CHEBI:16389"/>
    </ligand>
</feature>
<reference key="1">
    <citation type="journal article" date="1996" name="Mol. Phylogenet. Evol.">
        <title>Phylogenetics of the Caprinae based on cytochrome b sequence.</title>
        <authorList>
            <person name="Groves P."/>
            <person name="Shields G.F."/>
        </authorList>
    </citation>
    <scope>NUCLEOTIDE SEQUENCE [GENOMIC DNA]</scope>
    <source>
        <tissue>Liver</tissue>
    </source>
</reference>
<comment type="function">
    <text evidence="2">Component of the ubiquinol-cytochrome c reductase complex (complex III or cytochrome b-c1 complex) that is part of the mitochondrial respiratory chain. The b-c1 complex mediates electron transfer from ubiquinol to cytochrome c. Contributes to the generation of a proton gradient across the mitochondrial membrane that is then used for ATP synthesis.</text>
</comment>
<comment type="cofactor">
    <cofactor evidence="2">
        <name>heme b</name>
        <dbReference type="ChEBI" id="CHEBI:60344"/>
    </cofactor>
    <text evidence="2">Binds 2 heme b groups non-covalently.</text>
</comment>
<comment type="subunit">
    <text evidence="2">The cytochrome bc1 complex contains 11 subunits: 3 respiratory subunits (MT-CYB, CYC1 and UQCRFS1), 2 core proteins (UQCRC1 and UQCRC2) and 6 low-molecular weight proteins (UQCRH/QCR6, UQCRB/QCR7, UQCRQ/QCR8, UQCR10/QCR9, UQCR11/QCR10 and a cleavage product of UQCRFS1). This cytochrome bc1 complex then forms a dimer.</text>
</comment>
<comment type="subcellular location">
    <subcellularLocation>
        <location evidence="2">Mitochondrion inner membrane</location>
        <topology evidence="2">Multi-pass membrane protein</topology>
    </subcellularLocation>
</comment>
<comment type="miscellaneous">
    <text evidence="1">Heme 1 (or BL or b562) is low-potential and absorbs at about 562 nm, and heme 2 (or BH or b566) is high-potential and absorbs at about 566 nm.</text>
</comment>
<comment type="similarity">
    <text evidence="3 4">Belongs to the cytochrome b family.</text>
</comment>
<comment type="caution">
    <text evidence="2">The full-length protein contains only eight transmembrane helices, not nine as predicted by bioinformatics tools.</text>
</comment>
<evidence type="ECO:0000250" key="1"/>
<evidence type="ECO:0000250" key="2">
    <source>
        <dbReference type="UniProtKB" id="P00157"/>
    </source>
</evidence>
<evidence type="ECO:0000255" key="3">
    <source>
        <dbReference type="PROSITE-ProRule" id="PRU00967"/>
    </source>
</evidence>
<evidence type="ECO:0000255" key="4">
    <source>
        <dbReference type="PROSITE-ProRule" id="PRU00968"/>
    </source>
</evidence>
<geneLocation type="mitochondrion"/>
<organism>
    <name type="scientific">Naemorhedus caudatus</name>
    <name type="common">Chinese goral</name>
    <dbReference type="NCBI Taxonomy" id="37173"/>
    <lineage>
        <taxon>Eukaryota</taxon>
        <taxon>Metazoa</taxon>
        <taxon>Chordata</taxon>
        <taxon>Craniata</taxon>
        <taxon>Vertebrata</taxon>
        <taxon>Euteleostomi</taxon>
        <taxon>Mammalia</taxon>
        <taxon>Eutheria</taxon>
        <taxon>Laurasiatheria</taxon>
        <taxon>Artiodactyla</taxon>
        <taxon>Ruminantia</taxon>
        <taxon>Pecora</taxon>
        <taxon>Bovidae</taxon>
        <taxon>Caprinae</taxon>
        <taxon>Naemorhedus</taxon>
    </lineage>
</organism>
<proteinExistence type="inferred from homology"/>
<protein>
    <recommendedName>
        <fullName>Cytochrome b</fullName>
    </recommendedName>
    <alternativeName>
        <fullName>Complex III subunit 3</fullName>
    </alternativeName>
    <alternativeName>
        <fullName>Complex III subunit III</fullName>
    </alternativeName>
    <alternativeName>
        <fullName>Cytochrome b-c1 complex subunit 3</fullName>
    </alternativeName>
    <alternativeName>
        <fullName>Ubiquinol-cytochrome-c reductase complex cytochrome b subunit</fullName>
    </alternativeName>
</protein>
<gene>
    <name type="primary">MT-CYB</name>
    <name type="synonym">COB</name>
    <name type="synonym">CYTB</name>
    <name type="synonym">MTCYB</name>
</gene>
<keyword id="KW-0249">Electron transport</keyword>
<keyword id="KW-0349">Heme</keyword>
<keyword id="KW-0408">Iron</keyword>
<keyword id="KW-0472">Membrane</keyword>
<keyword id="KW-0479">Metal-binding</keyword>
<keyword id="KW-0496">Mitochondrion</keyword>
<keyword id="KW-0999">Mitochondrion inner membrane</keyword>
<keyword id="KW-0679">Respiratory chain</keyword>
<keyword id="KW-0812">Transmembrane</keyword>
<keyword id="KW-1133">Transmembrane helix</keyword>
<keyword id="KW-0813">Transport</keyword>
<keyword id="KW-0830">Ubiquinone</keyword>
<dbReference type="EMBL" id="U17861">
    <property type="protein sequence ID" value="AAC48622.1"/>
    <property type="molecule type" value="Genomic_DNA"/>
</dbReference>
<dbReference type="SMR" id="Q35130"/>
<dbReference type="GO" id="GO:0005743">
    <property type="term" value="C:mitochondrial inner membrane"/>
    <property type="evidence" value="ECO:0007669"/>
    <property type="project" value="UniProtKB-SubCell"/>
</dbReference>
<dbReference type="GO" id="GO:0045275">
    <property type="term" value="C:respiratory chain complex III"/>
    <property type="evidence" value="ECO:0007669"/>
    <property type="project" value="InterPro"/>
</dbReference>
<dbReference type="GO" id="GO:0046872">
    <property type="term" value="F:metal ion binding"/>
    <property type="evidence" value="ECO:0007669"/>
    <property type="project" value="UniProtKB-KW"/>
</dbReference>
<dbReference type="GO" id="GO:0008121">
    <property type="term" value="F:ubiquinol-cytochrome-c reductase activity"/>
    <property type="evidence" value="ECO:0007669"/>
    <property type="project" value="InterPro"/>
</dbReference>
<dbReference type="GO" id="GO:0006122">
    <property type="term" value="P:mitochondrial electron transport, ubiquinol to cytochrome c"/>
    <property type="evidence" value="ECO:0007669"/>
    <property type="project" value="TreeGrafter"/>
</dbReference>
<dbReference type="CDD" id="cd00290">
    <property type="entry name" value="cytochrome_b_C"/>
    <property type="match status" value="1"/>
</dbReference>
<dbReference type="CDD" id="cd00284">
    <property type="entry name" value="Cytochrome_b_N"/>
    <property type="match status" value="1"/>
</dbReference>
<dbReference type="FunFam" id="1.20.810.10:FF:000002">
    <property type="entry name" value="Cytochrome b"/>
    <property type="match status" value="1"/>
</dbReference>
<dbReference type="Gene3D" id="1.20.810.10">
    <property type="entry name" value="Cytochrome Bc1 Complex, Chain C"/>
    <property type="match status" value="1"/>
</dbReference>
<dbReference type="InterPro" id="IPR005798">
    <property type="entry name" value="Cyt_b/b6_C"/>
</dbReference>
<dbReference type="InterPro" id="IPR036150">
    <property type="entry name" value="Cyt_b/b6_C_sf"/>
</dbReference>
<dbReference type="InterPro" id="IPR005797">
    <property type="entry name" value="Cyt_b/b6_N"/>
</dbReference>
<dbReference type="InterPro" id="IPR027387">
    <property type="entry name" value="Cytb/b6-like_sf"/>
</dbReference>
<dbReference type="InterPro" id="IPR030689">
    <property type="entry name" value="Cytochrome_b"/>
</dbReference>
<dbReference type="InterPro" id="IPR048260">
    <property type="entry name" value="Cytochrome_b_C_euk/bac"/>
</dbReference>
<dbReference type="InterPro" id="IPR048259">
    <property type="entry name" value="Cytochrome_b_N_euk/bac"/>
</dbReference>
<dbReference type="InterPro" id="IPR016174">
    <property type="entry name" value="Di-haem_cyt_TM"/>
</dbReference>
<dbReference type="PANTHER" id="PTHR19271">
    <property type="entry name" value="CYTOCHROME B"/>
    <property type="match status" value="1"/>
</dbReference>
<dbReference type="PANTHER" id="PTHR19271:SF16">
    <property type="entry name" value="CYTOCHROME B"/>
    <property type="match status" value="1"/>
</dbReference>
<dbReference type="Pfam" id="PF00032">
    <property type="entry name" value="Cytochrom_B_C"/>
    <property type="match status" value="1"/>
</dbReference>
<dbReference type="Pfam" id="PF00033">
    <property type="entry name" value="Cytochrome_B"/>
    <property type="match status" value="1"/>
</dbReference>
<dbReference type="PIRSF" id="PIRSF038885">
    <property type="entry name" value="COB"/>
    <property type="match status" value="1"/>
</dbReference>
<dbReference type="SUPFAM" id="SSF81648">
    <property type="entry name" value="a domain/subunit of cytochrome bc1 complex (Ubiquinol-cytochrome c reductase)"/>
    <property type="match status" value="1"/>
</dbReference>
<dbReference type="SUPFAM" id="SSF81342">
    <property type="entry name" value="Transmembrane di-heme cytochromes"/>
    <property type="match status" value="1"/>
</dbReference>
<dbReference type="PROSITE" id="PS51003">
    <property type="entry name" value="CYTB_CTER"/>
    <property type="match status" value="1"/>
</dbReference>
<dbReference type="PROSITE" id="PS51002">
    <property type="entry name" value="CYTB_NTER"/>
    <property type="match status" value="1"/>
</dbReference>
<sequence length="379" mass="42764">MTNIRKTHPLMKIVNNAFIDLPTPPNISLWWNFGSLLGICLILQILTGLFLAMHYSSDTTTAFSSVTHICRDVNYGWIIRYMHANGASMFFICLFMHVGRGLYYGSYTFLETWNIGVVLLFATMATAFMGYVLPWGQMSFWGATVITNLLSAIPYIGTNLVEWIWGGFSVDKATLTRFFAFHFILPFIITATAMVHLLFLHEMGSNNPTGIPSDMDKIPFHPYYTIKDILGAMLLILTLILLVLFTPDLLGDPDNYTPANPLSTPPHIKPEWYFLFAYAILRSIPNKLGGVLALVLSILILAIVPLLHTSKQRSMMFRPISQCLFWTLVADLLALTWIGGQPVEYPYIIIGQLASIMYFFIILVLMPVAGTIENNLLKW</sequence>